<name>TRPD_METS4</name>
<accession>B0U7Z5</accession>
<keyword id="KW-0028">Amino-acid biosynthesis</keyword>
<keyword id="KW-0057">Aromatic amino acid biosynthesis</keyword>
<keyword id="KW-0328">Glycosyltransferase</keyword>
<keyword id="KW-0460">Magnesium</keyword>
<keyword id="KW-0479">Metal-binding</keyword>
<keyword id="KW-0808">Transferase</keyword>
<keyword id="KW-0822">Tryptophan biosynthesis</keyword>
<sequence length="337" mass="34332">MDSFKPYLAKVATGAALTREEARTAFDHLLSGEVTHAQAGAFLMALRVRGEAQDEIVGAAGALRERMVRVVAPAGAIDIVGTGGDHSGSYNVSTLASILTAACGVPVAKHGNRAASSRSGAADVLAALGVRLGLDPEGLARCLEEAGLCFMFAQAHHASMRHVAPVRVELGTRTLFNLLGPLCNPAGVAGQLLGVYAGSLAEPLTRVLADLGSRRVWTVHGSDGLDEITTTGPTAVVALEDGAIRHFTIDPREVGLALASPEDLRGADPEHNAAALRAVLDGARTPYRDIAVLNAGAALVVAGACAGLGEGVARAAQAIETGAARAVLARLVAVSNA</sequence>
<feature type="chain" id="PRO_1000099822" description="Anthranilate phosphoribosyltransferase">
    <location>
        <begin position="1"/>
        <end position="337"/>
    </location>
</feature>
<feature type="binding site" evidence="1">
    <location>
        <position position="81"/>
    </location>
    <ligand>
        <name>5-phospho-alpha-D-ribose 1-diphosphate</name>
        <dbReference type="ChEBI" id="CHEBI:58017"/>
    </ligand>
</feature>
<feature type="binding site" evidence="1">
    <location>
        <position position="81"/>
    </location>
    <ligand>
        <name>anthranilate</name>
        <dbReference type="ChEBI" id="CHEBI:16567"/>
        <label>1</label>
    </ligand>
</feature>
<feature type="binding site" evidence="1">
    <location>
        <begin position="84"/>
        <end position="85"/>
    </location>
    <ligand>
        <name>5-phospho-alpha-D-ribose 1-diphosphate</name>
        <dbReference type="ChEBI" id="CHEBI:58017"/>
    </ligand>
</feature>
<feature type="binding site" evidence="1">
    <location>
        <position position="89"/>
    </location>
    <ligand>
        <name>5-phospho-alpha-D-ribose 1-diphosphate</name>
        <dbReference type="ChEBI" id="CHEBI:58017"/>
    </ligand>
</feature>
<feature type="binding site" evidence="1">
    <location>
        <begin position="91"/>
        <end position="94"/>
    </location>
    <ligand>
        <name>5-phospho-alpha-D-ribose 1-diphosphate</name>
        <dbReference type="ChEBI" id="CHEBI:58017"/>
    </ligand>
</feature>
<feature type="binding site" evidence="1">
    <location>
        <position position="93"/>
    </location>
    <ligand>
        <name>Mg(2+)</name>
        <dbReference type="ChEBI" id="CHEBI:18420"/>
        <label>1</label>
    </ligand>
</feature>
<feature type="binding site" evidence="1">
    <location>
        <begin position="109"/>
        <end position="117"/>
    </location>
    <ligand>
        <name>5-phospho-alpha-D-ribose 1-diphosphate</name>
        <dbReference type="ChEBI" id="CHEBI:58017"/>
    </ligand>
</feature>
<feature type="binding site" evidence="1">
    <location>
        <position position="112"/>
    </location>
    <ligand>
        <name>anthranilate</name>
        <dbReference type="ChEBI" id="CHEBI:16567"/>
        <label>1</label>
    </ligand>
</feature>
<feature type="binding site" evidence="1">
    <location>
        <position position="121"/>
    </location>
    <ligand>
        <name>5-phospho-alpha-D-ribose 1-diphosphate</name>
        <dbReference type="ChEBI" id="CHEBI:58017"/>
    </ligand>
</feature>
<feature type="binding site" evidence="1">
    <location>
        <position position="167"/>
    </location>
    <ligand>
        <name>anthranilate</name>
        <dbReference type="ChEBI" id="CHEBI:16567"/>
        <label>2</label>
    </ligand>
</feature>
<feature type="binding site" evidence="1">
    <location>
        <position position="226"/>
    </location>
    <ligand>
        <name>Mg(2+)</name>
        <dbReference type="ChEBI" id="CHEBI:18420"/>
        <label>2</label>
    </ligand>
</feature>
<feature type="binding site" evidence="1">
    <location>
        <position position="227"/>
    </location>
    <ligand>
        <name>Mg(2+)</name>
        <dbReference type="ChEBI" id="CHEBI:18420"/>
        <label>1</label>
    </ligand>
</feature>
<feature type="binding site" evidence="1">
    <location>
        <position position="227"/>
    </location>
    <ligand>
        <name>Mg(2+)</name>
        <dbReference type="ChEBI" id="CHEBI:18420"/>
        <label>2</label>
    </ligand>
</feature>
<reference key="1">
    <citation type="submission" date="2008-02" db="EMBL/GenBank/DDBJ databases">
        <title>Complete sequence of chromosome of Methylobacterium sp. 4-46.</title>
        <authorList>
            <consortium name="US DOE Joint Genome Institute"/>
            <person name="Copeland A."/>
            <person name="Lucas S."/>
            <person name="Lapidus A."/>
            <person name="Glavina del Rio T."/>
            <person name="Dalin E."/>
            <person name="Tice H."/>
            <person name="Bruce D."/>
            <person name="Goodwin L."/>
            <person name="Pitluck S."/>
            <person name="Chertkov O."/>
            <person name="Brettin T."/>
            <person name="Detter J.C."/>
            <person name="Han C."/>
            <person name="Kuske C.R."/>
            <person name="Schmutz J."/>
            <person name="Larimer F."/>
            <person name="Land M."/>
            <person name="Hauser L."/>
            <person name="Kyrpides N."/>
            <person name="Ivanova N."/>
            <person name="Marx C.J."/>
            <person name="Richardson P."/>
        </authorList>
    </citation>
    <scope>NUCLEOTIDE SEQUENCE [LARGE SCALE GENOMIC DNA]</scope>
    <source>
        <strain>4-46</strain>
    </source>
</reference>
<protein>
    <recommendedName>
        <fullName evidence="1">Anthranilate phosphoribosyltransferase</fullName>
        <ecNumber evidence="1">2.4.2.18</ecNumber>
    </recommendedName>
</protein>
<gene>
    <name evidence="1" type="primary">trpD</name>
    <name type="ordered locus">M446_5395</name>
</gene>
<organism>
    <name type="scientific">Methylobacterium sp. (strain 4-46)</name>
    <dbReference type="NCBI Taxonomy" id="426117"/>
    <lineage>
        <taxon>Bacteria</taxon>
        <taxon>Pseudomonadati</taxon>
        <taxon>Pseudomonadota</taxon>
        <taxon>Alphaproteobacteria</taxon>
        <taxon>Hyphomicrobiales</taxon>
        <taxon>Methylobacteriaceae</taxon>
        <taxon>Methylobacterium</taxon>
    </lineage>
</organism>
<evidence type="ECO:0000255" key="1">
    <source>
        <dbReference type="HAMAP-Rule" id="MF_00211"/>
    </source>
</evidence>
<comment type="function">
    <text evidence="1">Catalyzes the transfer of the phosphoribosyl group of 5-phosphorylribose-1-pyrophosphate (PRPP) to anthranilate to yield N-(5'-phosphoribosyl)-anthranilate (PRA).</text>
</comment>
<comment type="catalytic activity">
    <reaction evidence="1">
        <text>N-(5-phospho-beta-D-ribosyl)anthranilate + diphosphate = 5-phospho-alpha-D-ribose 1-diphosphate + anthranilate</text>
        <dbReference type="Rhea" id="RHEA:11768"/>
        <dbReference type="ChEBI" id="CHEBI:16567"/>
        <dbReference type="ChEBI" id="CHEBI:18277"/>
        <dbReference type="ChEBI" id="CHEBI:33019"/>
        <dbReference type="ChEBI" id="CHEBI:58017"/>
        <dbReference type="EC" id="2.4.2.18"/>
    </reaction>
</comment>
<comment type="cofactor">
    <cofactor evidence="1">
        <name>Mg(2+)</name>
        <dbReference type="ChEBI" id="CHEBI:18420"/>
    </cofactor>
    <text evidence="1">Binds 2 magnesium ions per monomer.</text>
</comment>
<comment type="pathway">
    <text evidence="1">Amino-acid biosynthesis; L-tryptophan biosynthesis; L-tryptophan from chorismate: step 2/5.</text>
</comment>
<comment type="subunit">
    <text evidence="1">Homodimer.</text>
</comment>
<comment type="similarity">
    <text evidence="1">Belongs to the anthranilate phosphoribosyltransferase family.</text>
</comment>
<proteinExistence type="inferred from homology"/>
<dbReference type="EC" id="2.4.2.18" evidence="1"/>
<dbReference type="EMBL" id="CP000943">
    <property type="protein sequence ID" value="ACA19711.1"/>
    <property type="molecule type" value="Genomic_DNA"/>
</dbReference>
<dbReference type="RefSeq" id="WP_012335096.1">
    <property type="nucleotide sequence ID" value="NC_010511.1"/>
</dbReference>
<dbReference type="SMR" id="B0U7Z5"/>
<dbReference type="STRING" id="426117.M446_5395"/>
<dbReference type="KEGG" id="met:M446_5395"/>
<dbReference type="eggNOG" id="COG0547">
    <property type="taxonomic scope" value="Bacteria"/>
</dbReference>
<dbReference type="HOGENOM" id="CLU_034315_2_1_5"/>
<dbReference type="UniPathway" id="UPA00035">
    <property type="reaction ID" value="UER00041"/>
</dbReference>
<dbReference type="GO" id="GO:0005829">
    <property type="term" value="C:cytosol"/>
    <property type="evidence" value="ECO:0007669"/>
    <property type="project" value="TreeGrafter"/>
</dbReference>
<dbReference type="GO" id="GO:0004048">
    <property type="term" value="F:anthranilate phosphoribosyltransferase activity"/>
    <property type="evidence" value="ECO:0007669"/>
    <property type="project" value="UniProtKB-UniRule"/>
</dbReference>
<dbReference type="GO" id="GO:0000287">
    <property type="term" value="F:magnesium ion binding"/>
    <property type="evidence" value="ECO:0007669"/>
    <property type="project" value="UniProtKB-UniRule"/>
</dbReference>
<dbReference type="GO" id="GO:0000162">
    <property type="term" value="P:L-tryptophan biosynthetic process"/>
    <property type="evidence" value="ECO:0007669"/>
    <property type="project" value="UniProtKB-UniRule"/>
</dbReference>
<dbReference type="FunFam" id="3.40.1030.10:FF:000002">
    <property type="entry name" value="Anthranilate phosphoribosyltransferase"/>
    <property type="match status" value="1"/>
</dbReference>
<dbReference type="Gene3D" id="3.40.1030.10">
    <property type="entry name" value="Nucleoside phosphorylase/phosphoribosyltransferase catalytic domain"/>
    <property type="match status" value="1"/>
</dbReference>
<dbReference type="Gene3D" id="1.20.970.10">
    <property type="entry name" value="Transferase, Pyrimidine Nucleoside Phosphorylase, Chain C"/>
    <property type="match status" value="1"/>
</dbReference>
<dbReference type="HAMAP" id="MF_00211">
    <property type="entry name" value="TrpD"/>
    <property type="match status" value="1"/>
</dbReference>
<dbReference type="InterPro" id="IPR005940">
    <property type="entry name" value="Anthranilate_Pribosyl_Tfrase"/>
</dbReference>
<dbReference type="InterPro" id="IPR000312">
    <property type="entry name" value="Glycosyl_Trfase_fam3"/>
</dbReference>
<dbReference type="InterPro" id="IPR017459">
    <property type="entry name" value="Glycosyl_Trfase_fam3_N_dom"/>
</dbReference>
<dbReference type="InterPro" id="IPR036320">
    <property type="entry name" value="Glycosyl_Trfase_fam3_N_dom_sf"/>
</dbReference>
<dbReference type="InterPro" id="IPR035902">
    <property type="entry name" value="Nuc_phospho_transferase"/>
</dbReference>
<dbReference type="NCBIfam" id="TIGR01245">
    <property type="entry name" value="trpD"/>
    <property type="match status" value="1"/>
</dbReference>
<dbReference type="PANTHER" id="PTHR43285">
    <property type="entry name" value="ANTHRANILATE PHOSPHORIBOSYLTRANSFERASE"/>
    <property type="match status" value="1"/>
</dbReference>
<dbReference type="PANTHER" id="PTHR43285:SF2">
    <property type="entry name" value="ANTHRANILATE PHOSPHORIBOSYLTRANSFERASE"/>
    <property type="match status" value="1"/>
</dbReference>
<dbReference type="Pfam" id="PF02885">
    <property type="entry name" value="Glycos_trans_3N"/>
    <property type="match status" value="1"/>
</dbReference>
<dbReference type="Pfam" id="PF00591">
    <property type="entry name" value="Glycos_transf_3"/>
    <property type="match status" value="1"/>
</dbReference>
<dbReference type="SUPFAM" id="SSF52418">
    <property type="entry name" value="Nucleoside phosphorylase/phosphoribosyltransferase catalytic domain"/>
    <property type="match status" value="1"/>
</dbReference>
<dbReference type="SUPFAM" id="SSF47648">
    <property type="entry name" value="Nucleoside phosphorylase/phosphoribosyltransferase N-terminal domain"/>
    <property type="match status" value="1"/>
</dbReference>